<organism>
    <name type="scientific">Pongo abelii</name>
    <name type="common">Sumatran orangutan</name>
    <name type="synonym">Pongo pygmaeus abelii</name>
    <dbReference type="NCBI Taxonomy" id="9601"/>
    <lineage>
        <taxon>Eukaryota</taxon>
        <taxon>Metazoa</taxon>
        <taxon>Chordata</taxon>
        <taxon>Craniata</taxon>
        <taxon>Vertebrata</taxon>
        <taxon>Euteleostomi</taxon>
        <taxon>Mammalia</taxon>
        <taxon>Eutheria</taxon>
        <taxon>Euarchontoglires</taxon>
        <taxon>Primates</taxon>
        <taxon>Haplorrhini</taxon>
        <taxon>Catarrhini</taxon>
        <taxon>Hominidae</taxon>
        <taxon>Pongo</taxon>
    </lineage>
</organism>
<accession>Q5RD86</accession>
<protein>
    <recommendedName>
        <fullName evidence="1">DET1- and DDB1-associated protein 1</fullName>
    </recommendedName>
</protein>
<dbReference type="EMBL" id="CR858030">
    <property type="protein sequence ID" value="CAH90271.1"/>
    <property type="molecule type" value="mRNA"/>
</dbReference>
<dbReference type="RefSeq" id="NP_001125121.1">
    <property type="nucleotide sequence ID" value="NM_001131649.1"/>
</dbReference>
<dbReference type="SMR" id="Q5RD86"/>
<dbReference type="FunCoup" id="Q5RD86">
    <property type="interactions" value="1117"/>
</dbReference>
<dbReference type="STRING" id="9601.ENSPPYP00000010881"/>
<dbReference type="GeneID" id="100172004"/>
<dbReference type="KEGG" id="pon:100172004"/>
<dbReference type="CTD" id="79016"/>
<dbReference type="eggNOG" id="KOG4816">
    <property type="taxonomic scope" value="Eukaryota"/>
</dbReference>
<dbReference type="HOGENOM" id="CLU_144562_1_0_1"/>
<dbReference type="InParanoid" id="Q5RD86"/>
<dbReference type="OrthoDB" id="8598182at2759"/>
<dbReference type="TreeFam" id="TF323534"/>
<dbReference type="UniPathway" id="UPA00143"/>
<dbReference type="Proteomes" id="UP000001595">
    <property type="component" value="Chromosome 19"/>
</dbReference>
<dbReference type="GO" id="GO:0080008">
    <property type="term" value="C:Cul4-RING E3 ubiquitin ligase complex"/>
    <property type="evidence" value="ECO:0000250"/>
    <property type="project" value="UniProtKB"/>
</dbReference>
<dbReference type="GO" id="GO:0032436">
    <property type="term" value="P:positive regulation of proteasomal ubiquitin-dependent protein catabolic process"/>
    <property type="evidence" value="ECO:0007669"/>
    <property type="project" value="TreeGrafter"/>
</dbReference>
<dbReference type="GO" id="GO:0000209">
    <property type="term" value="P:protein polyubiquitination"/>
    <property type="evidence" value="ECO:0000250"/>
    <property type="project" value="UniProtKB"/>
</dbReference>
<dbReference type="InterPro" id="IPR033575">
    <property type="entry name" value="DDA1-like"/>
</dbReference>
<dbReference type="InterPro" id="IPR018276">
    <property type="entry name" value="DDA1_dom"/>
</dbReference>
<dbReference type="PANTHER" id="PTHR31879">
    <property type="entry name" value="DET1- AND DDB1-ASSOCIATED PROTEIN 1"/>
    <property type="match status" value="1"/>
</dbReference>
<dbReference type="PANTHER" id="PTHR31879:SF2">
    <property type="entry name" value="DET1- AND DDB1-ASSOCIATED PROTEIN 1"/>
    <property type="match status" value="1"/>
</dbReference>
<dbReference type="Pfam" id="PF10172">
    <property type="entry name" value="DDA1"/>
    <property type="match status" value="1"/>
</dbReference>
<feature type="initiator methionine" description="Removed" evidence="1">
    <location>
        <position position="1"/>
    </location>
</feature>
<feature type="chain" id="PRO_0000310272" description="DET1- and DDB1-associated protein 1">
    <location>
        <begin position="2"/>
        <end position="102"/>
    </location>
</feature>
<feature type="region of interest" description="Disordered" evidence="2">
    <location>
        <begin position="66"/>
        <end position="102"/>
    </location>
</feature>
<feature type="compositionally biased region" description="Basic and acidic residues" evidence="2">
    <location>
        <begin position="66"/>
        <end position="75"/>
    </location>
</feature>
<feature type="compositionally biased region" description="Basic and acidic residues" evidence="2">
    <location>
        <begin position="91"/>
        <end position="102"/>
    </location>
</feature>
<feature type="modified residue" description="N-acetylalanine" evidence="1">
    <location>
        <position position="2"/>
    </location>
</feature>
<feature type="modified residue" description="Phosphoserine" evidence="1">
    <location>
        <position position="33"/>
    </location>
</feature>
<feature type="modified residue" description="Phosphoserine" evidence="1">
    <location>
        <position position="95"/>
    </location>
</feature>
<keyword id="KW-0007">Acetylation</keyword>
<keyword id="KW-0597">Phosphoprotein</keyword>
<keyword id="KW-1185">Reference proteome</keyword>
<keyword id="KW-0833">Ubl conjugation pathway</keyword>
<sequence length="102" mass="11835">MADFLKGLPVYNKSNFSRFHADSVCKASNRRPSVYLPTREYPSEQIIVTEKTNILLRYLHQQWDKKNAAKKRDQEQVELEGESSAPPRKVARTDSPDMHEDT</sequence>
<comment type="function">
    <text evidence="1">Functions as a component of numerous distinct DCX (DDB1-CUL4-X-box) E3 ubiquitin-protein ligase complexes which mediate the ubiquitination and subsequent proteasomal degradation of target proteins. In the DCX complexes, acts as a scaffolding subunit required to stabilize the complex.</text>
</comment>
<comment type="pathway">
    <text evidence="1">Protein modification; protein ubiquitination.</text>
</comment>
<comment type="subunit">
    <text evidence="1">Component of numerous DCX (DDB1-CUL4-X-box) E3 ubiquitin-protein ligase complexes which consist of a core of DDB1, cullin-4 (CUL4A or CUL4B), DDA1 and RBX1. Component of the DCX(DCAF15) complex, also named CLR4(DCAF15) complex, composed of DCAF15, DDB1, cullin-4 (CUL4A or CUL4B), DDA1 and RBX1. Part of the DDD core complex containing DET1, DDA1 and DDB1; the DDD core complex recruits a specific UBE2E enzyme, such as UBE2E1, UBE2E2 UBE2E3, to form specific DDD-E2 complexes.</text>
</comment>
<comment type="similarity">
    <text evidence="3">Belongs to the DDA1 family.</text>
</comment>
<proteinExistence type="inferred from homology"/>
<evidence type="ECO:0000250" key="1">
    <source>
        <dbReference type="UniProtKB" id="Q9BW61"/>
    </source>
</evidence>
<evidence type="ECO:0000256" key="2">
    <source>
        <dbReference type="SAM" id="MobiDB-lite"/>
    </source>
</evidence>
<evidence type="ECO:0000305" key="3"/>
<gene>
    <name evidence="1" type="primary">DDA1</name>
</gene>
<name>DDA1_PONAB</name>
<reference key="1">
    <citation type="submission" date="2004-11" db="EMBL/GenBank/DDBJ databases">
        <authorList>
            <consortium name="The German cDNA consortium"/>
        </authorList>
    </citation>
    <scope>NUCLEOTIDE SEQUENCE [LARGE SCALE MRNA]</scope>
    <source>
        <tissue>Brain cortex</tissue>
    </source>
</reference>